<comment type="function">
    <text evidence="1">Plays an important role in the de novo pathway and in the salvage pathway of purine nucleotide biosynthesis. Catalyzes the first committed step in the biosynthesis of AMP from IMP (By similarity).</text>
</comment>
<comment type="catalytic activity">
    <reaction evidence="2">
        <text>IMP + L-aspartate + GTP = N(6)-(1,2-dicarboxyethyl)-AMP + GDP + phosphate + 2 H(+)</text>
        <dbReference type="Rhea" id="RHEA:15753"/>
        <dbReference type="ChEBI" id="CHEBI:15378"/>
        <dbReference type="ChEBI" id="CHEBI:29991"/>
        <dbReference type="ChEBI" id="CHEBI:37565"/>
        <dbReference type="ChEBI" id="CHEBI:43474"/>
        <dbReference type="ChEBI" id="CHEBI:57567"/>
        <dbReference type="ChEBI" id="CHEBI:58053"/>
        <dbReference type="ChEBI" id="CHEBI:58189"/>
        <dbReference type="EC" id="6.3.4.4"/>
    </reaction>
</comment>
<comment type="cofactor">
    <cofactor evidence="2">
        <name>Mg(2+)</name>
        <dbReference type="ChEBI" id="CHEBI:18420"/>
    </cofactor>
    <text evidence="2">Binds 1 Mg(2+) ion per subunit.</text>
</comment>
<comment type="pathway">
    <text evidence="2">Purine metabolism; AMP biosynthesis via de novo pathway; AMP from IMP: step 1/2.</text>
</comment>
<comment type="subunit">
    <text evidence="2">Homodimer.</text>
</comment>
<comment type="subcellular location">
    <subcellularLocation>
        <location evidence="2">Cytoplasm</location>
    </subcellularLocation>
</comment>
<comment type="similarity">
    <text evidence="2">Belongs to the adenylosuccinate synthetase family.</text>
</comment>
<gene>
    <name type="ORF">CD36_09080</name>
</gene>
<keyword id="KW-0963">Cytoplasm</keyword>
<keyword id="KW-0342">GTP-binding</keyword>
<keyword id="KW-0436">Ligase</keyword>
<keyword id="KW-0460">Magnesium</keyword>
<keyword id="KW-0479">Metal-binding</keyword>
<keyword id="KW-0547">Nucleotide-binding</keyword>
<keyword id="KW-0658">Purine biosynthesis</keyword>
<organism>
    <name type="scientific">Candida dubliniensis (strain CD36 / ATCC MYA-646 / CBS 7987 / NCPF 3949 / NRRL Y-17841)</name>
    <name type="common">Yeast</name>
    <dbReference type="NCBI Taxonomy" id="573826"/>
    <lineage>
        <taxon>Eukaryota</taxon>
        <taxon>Fungi</taxon>
        <taxon>Dikarya</taxon>
        <taxon>Ascomycota</taxon>
        <taxon>Saccharomycotina</taxon>
        <taxon>Pichiomycetes</taxon>
        <taxon>Debaryomycetaceae</taxon>
        <taxon>Candida/Lodderomyces clade</taxon>
        <taxon>Candida</taxon>
    </lineage>
</organism>
<accession>B9W8Y2</accession>
<name>PURA_CANDC</name>
<dbReference type="EC" id="6.3.4.4" evidence="2"/>
<dbReference type="EMBL" id="FM992688">
    <property type="protein sequence ID" value="CAX45207.1"/>
    <property type="molecule type" value="Genomic_DNA"/>
</dbReference>
<dbReference type="RefSeq" id="XP_002417552.1">
    <property type="nucleotide sequence ID" value="XM_002417507.1"/>
</dbReference>
<dbReference type="SMR" id="B9W8Y2"/>
<dbReference type="GeneID" id="8045099"/>
<dbReference type="KEGG" id="cdu:CD36_09080"/>
<dbReference type="CGD" id="CAL0000165931">
    <property type="gene designation" value="Cd36_09080"/>
</dbReference>
<dbReference type="eggNOG" id="KOG1355">
    <property type="taxonomic scope" value="Eukaryota"/>
</dbReference>
<dbReference type="HOGENOM" id="CLU_029848_3_2_1"/>
<dbReference type="OrthoDB" id="10265645at2759"/>
<dbReference type="UniPathway" id="UPA00075">
    <property type="reaction ID" value="UER00335"/>
</dbReference>
<dbReference type="Proteomes" id="UP000002605">
    <property type="component" value="Chromosome 1"/>
</dbReference>
<dbReference type="GO" id="GO:0005737">
    <property type="term" value="C:cytoplasm"/>
    <property type="evidence" value="ECO:0007669"/>
    <property type="project" value="UniProtKB-SubCell"/>
</dbReference>
<dbReference type="GO" id="GO:0004019">
    <property type="term" value="F:adenylosuccinate synthase activity"/>
    <property type="evidence" value="ECO:0007669"/>
    <property type="project" value="UniProtKB-UniRule"/>
</dbReference>
<dbReference type="GO" id="GO:0005525">
    <property type="term" value="F:GTP binding"/>
    <property type="evidence" value="ECO:0007669"/>
    <property type="project" value="UniProtKB-UniRule"/>
</dbReference>
<dbReference type="GO" id="GO:0000287">
    <property type="term" value="F:magnesium ion binding"/>
    <property type="evidence" value="ECO:0007669"/>
    <property type="project" value="UniProtKB-UniRule"/>
</dbReference>
<dbReference type="GO" id="GO:0044208">
    <property type="term" value="P:'de novo' AMP biosynthetic process"/>
    <property type="evidence" value="ECO:0007669"/>
    <property type="project" value="UniProtKB-UniRule"/>
</dbReference>
<dbReference type="GO" id="GO:0046040">
    <property type="term" value="P:IMP metabolic process"/>
    <property type="evidence" value="ECO:0007669"/>
    <property type="project" value="TreeGrafter"/>
</dbReference>
<dbReference type="CDD" id="cd03108">
    <property type="entry name" value="AdSS"/>
    <property type="match status" value="1"/>
</dbReference>
<dbReference type="FunFam" id="3.90.170.10:FF:000001">
    <property type="entry name" value="Adenylosuccinate synthetase"/>
    <property type="match status" value="1"/>
</dbReference>
<dbReference type="FunFam" id="1.10.300.10:FF:000002">
    <property type="entry name" value="Adenylosuccinate synthetase, chloroplastic"/>
    <property type="match status" value="1"/>
</dbReference>
<dbReference type="Gene3D" id="3.40.440.10">
    <property type="entry name" value="Adenylosuccinate Synthetase, subunit A, domain 1"/>
    <property type="match status" value="1"/>
</dbReference>
<dbReference type="Gene3D" id="1.10.300.10">
    <property type="entry name" value="Adenylosuccinate Synthetase, subunit A, domain 2"/>
    <property type="match status" value="1"/>
</dbReference>
<dbReference type="Gene3D" id="3.90.170.10">
    <property type="entry name" value="Adenylosuccinate Synthetase, subunit A, domain 3"/>
    <property type="match status" value="1"/>
</dbReference>
<dbReference type="HAMAP" id="MF_00011">
    <property type="entry name" value="Adenylosucc_synth"/>
    <property type="match status" value="1"/>
</dbReference>
<dbReference type="InterPro" id="IPR018220">
    <property type="entry name" value="Adenylosuccin_syn_GTP-bd"/>
</dbReference>
<dbReference type="InterPro" id="IPR033128">
    <property type="entry name" value="Adenylosuccin_syn_Lys_AS"/>
</dbReference>
<dbReference type="InterPro" id="IPR042109">
    <property type="entry name" value="Adenylosuccinate_synth_dom1"/>
</dbReference>
<dbReference type="InterPro" id="IPR042110">
    <property type="entry name" value="Adenylosuccinate_synth_dom2"/>
</dbReference>
<dbReference type="InterPro" id="IPR042111">
    <property type="entry name" value="Adenylosuccinate_synth_dom3"/>
</dbReference>
<dbReference type="InterPro" id="IPR001114">
    <property type="entry name" value="Adenylosuccinate_synthetase"/>
</dbReference>
<dbReference type="InterPro" id="IPR027417">
    <property type="entry name" value="P-loop_NTPase"/>
</dbReference>
<dbReference type="NCBIfam" id="NF002223">
    <property type="entry name" value="PRK01117.1"/>
    <property type="match status" value="1"/>
</dbReference>
<dbReference type="NCBIfam" id="TIGR00184">
    <property type="entry name" value="purA"/>
    <property type="match status" value="1"/>
</dbReference>
<dbReference type="PANTHER" id="PTHR11846">
    <property type="entry name" value="ADENYLOSUCCINATE SYNTHETASE"/>
    <property type="match status" value="1"/>
</dbReference>
<dbReference type="PANTHER" id="PTHR11846:SF0">
    <property type="entry name" value="ADENYLOSUCCINATE SYNTHETASE"/>
    <property type="match status" value="1"/>
</dbReference>
<dbReference type="Pfam" id="PF00709">
    <property type="entry name" value="Adenylsucc_synt"/>
    <property type="match status" value="1"/>
</dbReference>
<dbReference type="SMART" id="SM00788">
    <property type="entry name" value="Adenylsucc_synt"/>
    <property type="match status" value="1"/>
</dbReference>
<dbReference type="SUPFAM" id="SSF52540">
    <property type="entry name" value="P-loop containing nucleoside triphosphate hydrolases"/>
    <property type="match status" value="1"/>
</dbReference>
<dbReference type="PROSITE" id="PS01266">
    <property type="entry name" value="ADENYLOSUCCIN_SYN_1"/>
    <property type="match status" value="1"/>
</dbReference>
<dbReference type="PROSITE" id="PS00513">
    <property type="entry name" value="ADENYLOSUCCIN_SYN_2"/>
    <property type="match status" value="1"/>
</dbReference>
<feature type="chain" id="PRO_0000399328" description="Adenylosuccinate synthetase">
    <location>
        <begin position="1"/>
        <end position="428"/>
    </location>
</feature>
<feature type="active site" description="Proton acceptor" evidence="2">
    <location>
        <position position="12"/>
    </location>
</feature>
<feature type="active site" description="Proton donor" evidence="2">
    <location>
        <position position="40"/>
    </location>
</feature>
<feature type="binding site" evidence="2">
    <location>
        <begin position="11"/>
        <end position="17"/>
    </location>
    <ligand>
        <name>GTP</name>
        <dbReference type="ChEBI" id="CHEBI:37565"/>
    </ligand>
</feature>
<feature type="binding site" description="in other chain" evidence="2">
    <location>
        <begin position="12"/>
        <end position="15"/>
    </location>
    <ligand>
        <name>IMP</name>
        <dbReference type="ChEBI" id="CHEBI:58053"/>
        <note>ligand shared between dimeric partners</note>
    </ligand>
</feature>
<feature type="binding site" evidence="2">
    <location>
        <position position="12"/>
    </location>
    <ligand>
        <name>Mg(2+)</name>
        <dbReference type="ChEBI" id="CHEBI:18420"/>
    </ligand>
</feature>
<feature type="binding site" description="in other chain" evidence="2">
    <location>
        <begin position="37"/>
        <end position="40"/>
    </location>
    <ligand>
        <name>IMP</name>
        <dbReference type="ChEBI" id="CHEBI:58053"/>
        <note>ligand shared between dimeric partners</note>
    </ligand>
</feature>
<feature type="binding site" evidence="2">
    <location>
        <begin position="39"/>
        <end position="41"/>
    </location>
    <ligand>
        <name>GTP</name>
        <dbReference type="ChEBI" id="CHEBI:37565"/>
    </ligand>
</feature>
<feature type="binding site" evidence="2">
    <location>
        <position position="39"/>
    </location>
    <ligand>
        <name>Mg(2+)</name>
        <dbReference type="ChEBI" id="CHEBI:18420"/>
    </ligand>
</feature>
<feature type="binding site" description="in other chain" evidence="2">
    <location>
        <position position="130"/>
    </location>
    <ligand>
        <name>IMP</name>
        <dbReference type="ChEBI" id="CHEBI:58053"/>
        <note>ligand shared between dimeric partners</note>
    </ligand>
</feature>
<feature type="binding site" evidence="2">
    <location>
        <position position="144"/>
    </location>
    <ligand>
        <name>IMP</name>
        <dbReference type="ChEBI" id="CHEBI:58053"/>
        <note>ligand shared between dimeric partners</note>
    </ligand>
</feature>
<feature type="binding site" description="in other chain" evidence="2">
    <location>
        <position position="226"/>
    </location>
    <ligand>
        <name>IMP</name>
        <dbReference type="ChEBI" id="CHEBI:58053"/>
        <note>ligand shared between dimeric partners</note>
    </ligand>
</feature>
<feature type="binding site" description="in other chain" evidence="2">
    <location>
        <position position="241"/>
    </location>
    <ligand>
        <name>IMP</name>
        <dbReference type="ChEBI" id="CHEBI:58053"/>
        <note>ligand shared between dimeric partners</note>
    </ligand>
</feature>
<feature type="binding site" evidence="2">
    <location>
        <begin position="301"/>
        <end position="307"/>
    </location>
    <ligand>
        <name>substrate</name>
    </ligand>
</feature>
<feature type="binding site" description="in other chain" evidence="2">
    <location>
        <position position="305"/>
    </location>
    <ligand>
        <name>IMP</name>
        <dbReference type="ChEBI" id="CHEBI:58053"/>
        <note>ligand shared between dimeric partners</note>
    </ligand>
</feature>
<feature type="binding site" evidence="2">
    <location>
        <position position="307"/>
    </location>
    <ligand>
        <name>GTP</name>
        <dbReference type="ChEBI" id="CHEBI:37565"/>
    </ligand>
</feature>
<feature type="binding site" evidence="2">
    <location>
        <begin position="333"/>
        <end position="335"/>
    </location>
    <ligand>
        <name>GTP</name>
        <dbReference type="ChEBI" id="CHEBI:37565"/>
    </ligand>
</feature>
<feature type="binding site" evidence="2">
    <location>
        <begin position="415"/>
        <end position="417"/>
    </location>
    <ligand>
        <name>GTP</name>
        <dbReference type="ChEBI" id="CHEBI:37565"/>
    </ligand>
</feature>
<sequence>MCDVVLGSQWGDEGKGKLVDLLCDDIDVCARCQGGNNAGHTIVVGKVKYDFHMLPSGLVNPKCQNLVGSGVVIHVPSFFAELENLEAKGLDCRDRLFVSSRAHLVFDFHQRTDKLKEAELSTNKKSIGTTGKGIGPTYSTKASRSGIRVHHLVNPDPEAWEDFKTRYMRLVESRQKRYGEFEYDPKEELARFEKYREALRPFVVDSVNFMHEAIAANKKILVEGANALMLDIDFGTYPYVTSSSTGIGGVLTGLGIPPRTIRNVYGVVKAYTTRVGEGPFPTEQLNKVGETLQDVGAEYGVTTGRKRRCGWLDLVVLKYSNSINGYTSLNITKLDVLDKFKEIEVGVAYKLNGKELPSFPEDLIDLAKVEVVYKKFPGWEQDITGIKKYDDLPENAKNYLKFIEDYLQVPIQWVGTGPARDSMLEKKI</sequence>
<evidence type="ECO:0000250" key="1"/>
<evidence type="ECO:0000255" key="2">
    <source>
        <dbReference type="HAMAP-Rule" id="MF_03125"/>
    </source>
</evidence>
<protein>
    <recommendedName>
        <fullName evidence="2">Adenylosuccinate synthetase</fullName>
        <shortName evidence="2">AMPSase</shortName>
        <shortName evidence="2">AdSS</shortName>
        <ecNumber evidence="2">6.3.4.4</ecNumber>
    </recommendedName>
    <alternativeName>
        <fullName evidence="2">IMP--aspartate ligase</fullName>
    </alternativeName>
</protein>
<proteinExistence type="inferred from homology"/>
<reference key="1">
    <citation type="journal article" date="2009" name="Genome Res.">
        <title>Comparative genomics of the fungal pathogens Candida dubliniensis and Candida albicans.</title>
        <authorList>
            <person name="Jackson A.P."/>
            <person name="Gamble J.A."/>
            <person name="Yeomans T."/>
            <person name="Moran G.P."/>
            <person name="Saunders D."/>
            <person name="Harris D."/>
            <person name="Aslett M."/>
            <person name="Barrell J.F."/>
            <person name="Butler G."/>
            <person name="Citiulo F."/>
            <person name="Coleman D.C."/>
            <person name="de Groot P.W.J."/>
            <person name="Goodwin T.J."/>
            <person name="Quail M.A."/>
            <person name="McQuillan J."/>
            <person name="Munro C.A."/>
            <person name="Pain A."/>
            <person name="Poulter R.T."/>
            <person name="Rajandream M.A."/>
            <person name="Renauld H."/>
            <person name="Spiering M.J."/>
            <person name="Tivey A."/>
            <person name="Gow N.A.R."/>
            <person name="Barrell B."/>
            <person name="Sullivan D.J."/>
            <person name="Berriman M."/>
        </authorList>
    </citation>
    <scope>NUCLEOTIDE SEQUENCE [LARGE SCALE GENOMIC DNA]</scope>
    <source>
        <strain>CD36 / ATCC MYA-646 / CBS 7987 / NCPF 3949 / NRRL Y-17841</strain>
    </source>
</reference>